<dbReference type="EC" id="1.-.-.-" evidence="6"/>
<dbReference type="EMBL" id="KY764297">
    <property type="protein sequence ID" value="ARF05982.1"/>
    <property type="molecule type" value="Genomic_DNA"/>
</dbReference>
<dbReference type="SMR" id="A0A1W5T4X6"/>
<dbReference type="GO" id="GO:0005739">
    <property type="term" value="C:mitochondrion"/>
    <property type="evidence" value="ECO:0007669"/>
    <property type="project" value="TreeGrafter"/>
</dbReference>
<dbReference type="GO" id="GO:0000166">
    <property type="term" value="F:nucleotide binding"/>
    <property type="evidence" value="ECO:0007669"/>
    <property type="project" value="UniProtKB-KW"/>
</dbReference>
<dbReference type="GO" id="GO:0016491">
    <property type="term" value="F:oxidoreductase activity"/>
    <property type="evidence" value="ECO:0007669"/>
    <property type="project" value="UniProtKB-KW"/>
</dbReference>
<dbReference type="CDD" id="cd08267">
    <property type="entry name" value="MDR1"/>
    <property type="match status" value="1"/>
</dbReference>
<dbReference type="Gene3D" id="3.90.180.10">
    <property type="entry name" value="Medium-chain alcohol dehydrogenases, catalytic domain"/>
    <property type="match status" value="1"/>
</dbReference>
<dbReference type="Gene3D" id="3.40.50.720">
    <property type="entry name" value="NAD(P)-binding Rossmann-like Domain"/>
    <property type="match status" value="1"/>
</dbReference>
<dbReference type="InterPro" id="IPR011032">
    <property type="entry name" value="GroES-like_sf"/>
</dbReference>
<dbReference type="InterPro" id="IPR036291">
    <property type="entry name" value="NAD(P)-bd_dom_sf"/>
</dbReference>
<dbReference type="InterPro" id="IPR020843">
    <property type="entry name" value="PKS_ER"/>
</dbReference>
<dbReference type="InterPro" id="IPR050700">
    <property type="entry name" value="YIM1/Zinc_Alcohol_DH_Fams"/>
</dbReference>
<dbReference type="PANTHER" id="PTHR11695">
    <property type="entry name" value="ALCOHOL DEHYDROGENASE RELATED"/>
    <property type="match status" value="1"/>
</dbReference>
<dbReference type="PANTHER" id="PTHR11695:SF294">
    <property type="entry name" value="RETICULON-4-INTERACTING PROTEIN 1, MITOCHONDRIAL"/>
    <property type="match status" value="1"/>
</dbReference>
<dbReference type="Pfam" id="PF13602">
    <property type="entry name" value="ADH_zinc_N_2"/>
    <property type="match status" value="1"/>
</dbReference>
<dbReference type="SMART" id="SM00829">
    <property type="entry name" value="PKS_ER"/>
    <property type="match status" value="1"/>
</dbReference>
<dbReference type="SUPFAM" id="SSF50129">
    <property type="entry name" value="GroES-like"/>
    <property type="match status" value="1"/>
</dbReference>
<dbReference type="SUPFAM" id="SSF51735">
    <property type="entry name" value="NAD(P)-binding Rossmann-fold domains"/>
    <property type="match status" value="1"/>
</dbReference>
<organism>
    <name type="scientific">Penicillium oxalicum</name>
    <dbReference type="NCBI Taxonomy" id="69781"/>
    <lineage>
        <taxon>Eukaryota</taxon>
        <taxon>Fungi</taxon>
        <taxon>Dikarya</taxon>
        <taxon>Ascomycota</taxon>
        <taxon>Pezizomycotina</taxon>
        <taxon>Eurotiomycetes</taxon>
        <taxon>Eurotiomycetidae</taxon>
        <taxon>Eurotiales</taxon>
        <taxon>Aspergillaceae</taxon>
        <taxon>Penicillium</taxon>
    </lineage>
</organism>
<evidence type="ECO:0000250" key="1">
    <source>
        <dbReference type="UniProtKB" id="Q9Y7D0"/>
    </source>
</evidence>
<evidence type="ECO:0000255" key="2"/>
<evidence type="ECO:0000269" key="3">
    <source>
    </source>
</evidence>
<evidence type="ECO:0000303" key="4">
    <source>
    </source>
</evidence>
<evidence type="ECO:0000305" key="5"/>
<evidence type="ECO:0000305" key="6">
    <source>
    </source>
</evidence>
<evidence type="ECO:0000305" key="7">
    <source>
    </source>
</evidence>
<sequence>MSTTTTMRAWTYMQSGLPSQTIVLDDEAPSPSAAELGPDELLIAVNYVAMNSGFTTLMRSLPPQPYSLPHIYNRQKRLGVPEFEFSGRILAVGSAIPSTRPDLQPSTLVLGCCAAKRVFIEGKGALAERVIAPAAQLIPLRPLSTVTTQDDESPGPDPAAPPISLLEASGLSACGCTAVQVLDLTKLVAGDKLFVNGGSTSVGMLTIQVARQVLGQTGTIIASGTDTTLIRSVGADDVIDYTAQRPLHEFLRTHHADRPFDAIIDCVGVAELYTHCEPYLAPGKLFINLGAMTAKPTFWGLLSFVWNQHMAPLWPVVLGGVPRSYQFYSARPNRETLGRVMRLVERGELRMVVDSVWEMRDAKMAYKRMESKRAKGKIIVRVQEE</sequence>
<protein>
    <recommendedName>
        <fullName evidence="4">Trans-enoyl reductase poxH</fullName>
        <ecNumber evidence="6">1.-.-.-</ecNumber>
    </recommendedName>
    <alternativeName>
        <fullName evidence="4">Oxaleimides biosynthesis cluster protein H</fullName>
    </alternativeName>
</protein>
<comment type="function">
    <text evidence="3 7">Trans-enoyl reductase; part of the gene cluster that mediates the biosynthesis of oxaleimides, cytotoxic compounds containing an unusual disubstituted succinimide moiety (PubMed:28365998). The first step of the pathway is provided by the HR-PKS poxF that serves in a new mode of collaborative biosynthesis with the PKS-NRPS poxE, by providing the olefin containing amino acid substrate via the synthesis of an ACP-bound dec-4-enoate (PubMed:28365998). The cytochrome P450 monooxygenase poxM-catalyzed oxidation at the alpha-position creates the enzyme-bound 2-hydroxydec-4-enoyl-ACP thioester, which may be prone to spontaneous hydrolysis to yield 2-hydroxydec-4-enoic acid due to increased electrophilicity of the carbonyl (PubMed:28365998). 2-hydroxydec-4-enoic acid can then be further oxidized by poxM to yield the alpha-ketoacid 2-oxodec-4-enoicacid, which is reductively aminated by the aminotransferase poxL to yield (S,E)-2-aminodec-4-enoic acid (PubMed:28365998). The Hybrid PKS-NRPS synthetase poxE then performs condensation between the octaketide product of its PKS modules and the amino group of (S,E)-2-aminodec-4-enoic acid which is activated and incorporated by the adenylation domain (PubMed:28365998). The resulting aminoacyl product can be cyclized by the Diels-Alderase PoxQ and reductively released by the reductive (R) domain of poxE to yield an aldehyde intermediate (Probable) (PubMed:28365998). The released aldehyde is then substrate for a Knoevenagel condensation by the hydrolyase poxO followed by an oxidation at the 5-position of the pyrrolidone ring (PubMed:28365998). The presence of the olefin from the amino acid building block allows for migration of the substituted allyl group to occur (PubMed:28365998). This allylic transposition reaction takes place in a conjugate addition, semipinacol-like fashion to yield a succinimide intermediate (PubMed:28365998). Iterative two-electron oxidations of the C7 methyl of the succinimide intermediate to the carboxylic acid can be catalyzed by one of two remaining cytochrome P450 monooxygenasess poxC or poxD to yield oxaleimide A (PubMed:28365998). Subsequent oxidation yields the maleimide scaffold oxaleimide I (PubMed:28365998). Both oxaleimide A and oxaleimide I can undergo oxidative modifications in the decalin ring to yield the series of products oxaleimides B to H (PubMed:28365998).</text>
</comment>
<comment type="pathway">
    <text evidence="6">Secondary metabolite biosynthesis.</text>
</comment>
<comment type="subunit">
    <text evidence="1">Monomer.</text>
</comment>
<comment type="induction">
    <text evidence="3">Expression is positively regulated by the oxaleimides biosynthesis cluster-specific transcription factor poxB.</text>
</comment>
<comment type="similarity">
    <text evidence="5">Belongs to the zinc-containing alcohol dehydrogenase family.</text>
</comment>
<gene>
    <name evidence="4" type="primary">poxH</name>
</gene>
<feature type="chain" id="PRO_0000453757" description="Trans-enoyl reductase poxH">
    <location>
        <begin position="1"/>
        <end position="385"/>
    </location>
</feature>
<feature type="binding site" evidence="1">
    <location>
        <begin position="64"/>
        <end position="67"/>
    </location>
    <ligand>
        <name>NADP(+)</name>
        <dbReference type="ChEBI" id="CHEBI:58349"/>
    </ligand>
</feature>
<feature type="binding site" evidence="2">
    <location>
        <begin position="156"/>
        <end position="163"/>
    </location>
    <ligand>
        <name>substrate</name>
    </ligand>
</feature>
<feature type="binding site" evidence="1">
    <location>
        <begin position="199"/>
        <end position="202"/>
    </location>
    <ligand>
        <name>NADP(+)</name>
        <dbReference type="ChEBI" id="CHEBI:58349"/>
    </ligand>
</feature>
<feature type="binding site" evidence="1">
    <location>
        <begin position="223"/>
        <end position="226"/>
    </location>
    <ligand>
        <name>NADP(+)</name>
        <dbReference type="ChEBI" id="CHEBI:58349"/>
    </ligand>
</feature>
<feature type="binding site" evidence="1">
    <location>
        <position position="241"/>
    </location>
    <ligand>
        <name>NADP(+)</name>
        <dbReference type="ChEBI" id="CHEBI:58349"/>
    </ligand>
</feature>
<feature type="binding site" evidence="1">
    <location>
        <begin position="289"/>
        <end position="290"/>
    </location>
    <ligand>
        <name>NADP(+)</name>
        <dbReference type="ChEBI" id="CHEBI:58349"/>
    </ligand>
</feature>
<feature type="binding site" evidence="2">
    <location>
        <begin position="309"/>
        <end position="313"/>
    </location>
    <ligand>
        <name>substrate</name>
    </ligand>
</feature>
<feature type="binding site" evidence="1">
    <location>
        <begin position="372"/>
        <end position="373"/>
    </location>
    <ligand>
        <name>NADP(+)</name>
        <dbReference type="ChEBI" id="CHEBI:58349"/>
    </ligand>
</feature>
<keyword id="KW-0521">NADP</keyword>
<keyword id="KW-0547">Nucleotide-binding</keyword>
<keyword id="KW-0560">Oxidoreductase</keyword>
<accession>A0A1W5T4X6</accession>
<name>POXH_PENOX</name>
<reference key="1">
    <citation type="journal article" date="2017" name="J. Am. Chem. Soc.">
        <title>Collaborative Biosynthesis of Maleimide- and Succinimide-Containing Natural Products by Fungal Polyketide Megasynthases.</title>
        <authorList>
            <person name="Sato M."/>
            <person name="Dander J.E."/>
            <person name="Sato C."/>
            <person name="Hung Y.S."/>
            <person name="Gao S.S."/>
            <person name="Tang M.C."/>
            <person name="Hang L."/>
            <person name="Winter J.M."/>
            <person name="Garg N.K."/>
            <person name="Watanabe K."/>
            <person name="Tang Y."/>
        </authorList>
    </citation>
    <scope>NUCLEOTIDE SEQUENCE [GENOMIC DNA]</scope>
    <scope>FUNCTION</scope>
    <scope>INDUCTION</scope>
    <scope>PATHWAY</scope>
    <source>
        <strain>K85</strain>
    </source>
</reference>
<reference key="2">
    <citation type="journal article" date="2020" name="Chem. Commun. (Camb.)">
        <title>Evidence for enzyme catalysed intramolecular [4+2] Diels-Alder cyclization during the biosynthesis of pyrichalasin H.</title>
        <authorList>
            <person name="Hantke V."/>
            <person name="Skellam E.J."/>
            <person name="Cox R.J."/>
        </authorList>
    </citation>
    <scope>FUNCTION</scope>
</reference>
<proteinExistence type="evidence at transcript level"/>